<keyword id="KW-0131">Cell cycle</keyword>
<keyword id="KW-0132">Cell division</keyword>
<keyword id="KW-0997">Cell inner membrane</keyword>
<keyword id="KW-1003">Cell membrane</keyword>
<keyword id="KW-0133">Cell shape</keyword>
<keyword id="KW-0961">Cell wall biogenesis/degradation</keyword>
<keyword id="KW-0460">Magnesium</keyword>
<keyword id="KW-0472">Membrane</keyword>
<keyword id="KW-0479">Metal-binding</keyword>
<keyword id="KW-0573">Peptidoglycan synthesis</keyword>
<keyword id="KW-0808">Transferase</keyword>
<keyword id="KW-0812">Transmembrane</keyword>
<keyword id="KW-1133">Transmembrane helix</keyword>
<accession>A9KES2</accession>
<name>MRAY_COXBN</name>
<evidence type="ECO:0000255" key="1">
    <source>
        <dbReference type="HAMAP-Rule" id="MF_00038"/>
    </source>
</evidence>
<reference key="1">
    <citation type="journal article" date="2009" name="Infect. Immun.">
        <title>Comparative genomics reveal extensive transposon-mediated genomic plasticity and diversity among potential effector proteins within the genus Coxiella.</title>
        <authorList>
            <person name="Beare P.A."/>
            <person name="Unsworth N."/>
            <person name="Andoh M."/>
            <person name="Voth D.E."/>
            <person name="Omsland A."/>
            <person name="Gilk S.D."/>
            <person name="Williams K.P."/>
            <person name="Sobral B.W."/>
            <person name="Kupko J.J. III"/>
            <person name="Porcella S.F."/>
            <person name="Samuel J.E."/>
            <person name="Heinzen R.A."/>
        </authorList>
    </citation>
    <scope>NUCLEOTIDE SEQUENCE [LARGE SCALE GENOMIC DNA]</scope>
    <source>
        <strain>Dugway 5J108-111</strain>
    </source>
</reference>
<organism>
    <name type="scientific">Coxiella burnetii (strain Dugway 5J108-111)</name>
    <dbReference type="NCBI Taxonomy" id="434922"/>
    <lineage>
        <taxon>Bacteria</taxon>
        <taxon>Pseudomonadati</taxon>
        <taxon>Pseudomonadota</taxon>
        <taxon>Gammaproteobacteria</taxon>
        <taxon>Legionellales</taxon>
        <taxon>Coxiellaceae</taxon>
        <taxon>Coxiella</taxon>
    </lineage>
</organism>
<proteinExistence type="inferred from homology"/>
<sequence>MLLWLTNFLSQHFHAFRVFNYLTFRSIVSALTALILVLSLSPRLIKYLVSLQVGQMVRNDGPQTHLKKSGTPTMGGVLIIVAIVISVLLWGDLSNRFIWVILLVTVAFSAIGWMDDYRKIIRKNSKGLSARSKYLLQSIIGALAAVYLYFSATTGAETALVIPFLKNVLPNLGLFYIVLAYFVIVGSSNAVNLTDGLDGLALMPTVMIGAALGVFAYTTGNHFFAQYLAIPYIPGAGEVVVFCSALVGAGLGFLWYNTYPAQVFMGDVGSLGLGAALGVTAVVVRQELVYFLMGGIFVAETLSVILQVGYFKLSGGKRIFRMAPLHHHFELKGWPEPKVIVRFWIITFILVLCGLATLKLR</sequence>
<gene>
    <name evidence="1" type="primary">mraY</name>
    <name type="ordered locus">CBUD_1980</name>
</gene>
<comment type="function">
    <text evidence="1">Catalyzes the initial step of the lipid cycle reactions in the biosynthesis of the cell wall peptidoglycan: transfers peptidoglycan precursor phospho-MurNAc-pentapeptide from UDP-MurNAc-pentapeptide onto the lipid carrier undecaprenyl phosphate, yielding undecaprenyl-pyrophosphoryl-MurNAc-pentapeptide, known as lipid I.</text>
</comment>
<comment type="catalytic activity">
    <reaction evidence="1">
        <text>UDP-N-acetyl-alpha-D-muramoyl-L-alanyl-gamma-D-glutamyl-meso-2,6-diaminopimeloyl-D-alanyl-D-alanine + di-trans,octa-cis-undecaprenyl phosphate = di-trans,octa-cis-undecaprenyl diphospho-N-acetyl-alpha-D-muramoyl-L-alanyl-D-glutamyl-meso-2,6-diaminopimeloyl-D-alanyl-D-alanine + UMP</text>
        <dbReference type="Rhea" id="RHEA:28386"/>
        <dbReference type="ChEBI" id="CHEBI:57865"/>
        <dbReference type="ChEBI" id="CHEBI:60392"/>
        <dbReference type="ChEBI" id="CHEBI:61386"/>
        <dbReference type="ChEBI" id="CHEBI:61387"/>
        <dbReference type="EC" id="2.7.8.13"/>
    </reaction>
</comment>
<comment type="cofactor">
    <cofactor evidence="1">
        <name>Mg(2+)</name>
        <dbReference type="ChEBI" id="CHEBI:18420"/>
    </cofactor>
</comment>
<comment type="pathway">
    <text evidence="1">Cell wall biogenesis; peptidoglycan biosynthesis.</text>
</comment>
<comment type="subcellular location">
    <subcellularLocation>
        <location evidence="1">Cell inner membrane</location>
        <topology evidence="1">Multi-pass membrane protein</topology>
    </subcellularLocation>
</comment>
<comment type="similarity">
    <text evidence="1">Belongs to the glycosyltransferase 4 family. MraY subfamily.</text>
</comment>
<dbReference type="EC" id="2.7.8.13" evidence="1"/>
<dbReference type="EMBL" id="CP000733">
    <property type="protein sequence ID" value="ABS78192.1"/>
    <property type="molecule type" value="Genomic_DNA"/>
</dbReference>
<dbReference type="RefSeq" id="WP_005769458.1">
    <property type="nucleotide sequence ID" value="NC_009727.1"/>
</dbReference>
<dbReference type="SMR" id="A9KES2"/>
<dbReference type="KEGG" id="cbd:CBUD_1980"/>
<dbReference type="HOGENOM" id="CLU_023982_0_0_6"/>
<dbReference type="UniPathway" id="UPA00219"/>
<dbReference type="Proteomes" id="UP000008555">
    <property type="component" value="Chromosome"/>
</dbReference>
<dbReference type="GO" id="GO:0005886">
    <property type="term" value="C:plasma membrane"/>
    <property type="evidence" value="ECO:0007669"/>
    <property type="project" value="UniProtKB-SubCell"/>
</dbReference>
<dbReference type="GO" id="GO:0046872">
    <property type="term" value="F:metal ion binding"/>
    <property type="evidence" value="ECO:0007669"/>
    <property type="project" value="UniProtKB-KW"/>
</dbReference>
<dbReference type="GO" id="GO:0008963">
    <property type="term" value="F:phospho-N-acetylmuramoyl-pentapeptide-transferase activity"/>
    <property type="evidence" value="ECO:0007669"/>
    <property type="project" value="UniProtKB-UniRule"/>
</dbReference>
<dbReference type="GO" id="GO:0051992">
    <property type="term" value="F:UDP-N-acetylmuramoyl-L-alanyl-D-glutamyl-meso-2,6-diaminopimelyl-D-alanyl-D-alanine:undecaprenyl-phosphate transferase activity"/>
    <property type="evidence" value="ECO:0007669"/>
    <property type="project" value="RHEA"/>
</dbReference>
<dbReference type="GO" id="GO:0051301">
    <property type="term" value="P:cell division"/>
    <property type="evidence" value="ECO:0007669"/>
    <property type="project" value="UniProtKB-KW"/>
</dbReference>
<dbReference type="GO" id="GO:0071555">
    <property type="term" value="P:cell wall organization"/>
    <property type="evidence" value="ECO:0007669"/>
    <property type="project" value="UniProtKB-KW"/>
</dbReference>
<dbReference type="GO" id="GO:0009252">
    <property type="term" value="P:peptidoglycan biosynthetic process"/>
    <property type="evidence" value="ECO:0007669"/>
    <property type="project" value="UniProtKB-UniRule"/>
</dbReference>
<dbReference type="GO" id="GO:0008360">
    <property type="term" value="P:regulation of cell shape"/>
    <property type="evidence" value="ECO:0007669"/>
    <property type="project" value="UniProtKB-KW"/>
</dbReference>
<dbReference type="CDD" id="cd06852">
    <property type="entry name" value="GT_MraY"/>
    <property type="match status" value="1"/>
</dbReference>
<dbReference type="HAMAP" id="MF_00038">
    <property type="entry name" value="MraY"/>
    <property type="match status" value="1"/>
</dbReference>
<dbReference type="InterPro" id="IPR000715">
    <property type="entry name" value="Glycosyl_transferase_4"/>
</dbReference>
<dbReference type="InterPro" id="IPR003524">
    <property type="entry name" value="PNAcMuramoyl-5peptid_Trfase"/>
</dbReference>
<dbReference type="InterPro" id="IPR018480">
    <property type="entry name" value="PNAcMuramoyl-5peptid_Trfase_CS"/>
</dbReference>
<dbReference type="NCBIfam" id="TIGR00445">
    <property type="entry name" value="mraY"/>
    <property type="match status" value="1"/>
</dbReference>
<dbReference type="PANTHER" id="PTHR22926">
    <property type="entry name" value="PHOSPHO-N-ACETYLMURAMOYL-PENTAPEPTIDE-TRANSFERASE"/>
    <property type="match status" value="1"/>
</dbReference>
<dbReference type="PANTHER" id="PTHR22926:SF5">
    <property type="entry name" value="PHOSPHO-N-ACETYLMURAMOYL-PENTAPEPTIDE-TRANSFERASE HOMOLOG"/>
    <property type="match status" value="1"/>
</dbReference>
<dbReference type="Pfam" id="PF00953">
    <property type="entry name" value="Glycos_transf_4"/>
    <property type="match status" value="1"/>
</dbReference>
<dbReference type="Pfam" id="PF10555">
    <property type="entry name" value="MraY_sig1"/>
    <property type="match status" value="1"/>
</dbReference>
<dbReference type="PROSITE" id="PS01347">
    <property type="entry name" value="MRAY_1"/>
    <property type="match status" value="1"/>
</dbReference>
<dbReference type="PROSITE" id="PS01348">
    <property type="entry name" value="MRAY_2"/>
    <property type="match status" value="1"/>
</dbReference>
<feature type="chain" id="PRO_1000074539" description="Phospho-N-acetylmuramoyl-pentapeptide-transferase">
    <location>
        <begin position="1"/>
        <end position="361"/>
    </location>
</feature>
<feature type="transmembrane region" description="Helical" evidence="1">
    <location>
        <begin position="18"/>
        <end position="38"/>
    </location>
</feature>
<feature type="transmembrane region" description="Helical" evidence="1">
    <location>
        <begin position="73"/>
        <end position="93"/>
    </location>
</feature>
<feature type="transmembrane region" description="Helical" evidence="1">
    <location>
        <begin position="97"/>
        <end position="117"/>
    </location>
</feature>
<feature type="transmembrane region" description="Helical" evidence="1">
    <location>
        <begin position="135"/>
        <end position="155"/>
    </location>
</feature>
<feature type="transmembrane region" description="Helical" evidence="1">
    <location>
        <begin position="168"/>
        <end position="188"/>
    </location>
</feature>
<feature type="transmembrane region" description="Helical" evidence="1">
    <location>
        <begin position="196"/>
        <end position="216"/>
    </location>
</feature>
<feature type="transmembrane region" description="Helical" evidence="1">
    <location>
        <begin position="235"/>
        <end position="255"/>
    </location>
</feature>
<feature type="transmembrane region" description="Helical" evidence="1">
    <location>
        <begin position="263"/>
        <end position="283"/>
    </location>
</feature>
<feature type="transmembrane region" description="Helical" evidence="1">
    <location>
        <begin position="288"/>
        <end position="308"/>
    </location>
</feature>
<feature type="transmembrane region" description="Helical" evidence="1">
    <location>
        <begin position="338"/>
        <end position="358"/>
    </location>
</feature>
<protein>
    <recommendedName>
        <fullName evidence="1">Phospho-N-acetylmuramoyl-pentapeptide-transferase</fullName>
        <ecNumber evidence="1">2.7.8.13</ecNumber>
    </recommendedName>
    <alternativeName>
        <fullName evidence="1">UDP-MurNAc-pentapeptide phosphotransferase</fullName>
    </alternativeName>
</protein>